<comment type="function">
    <text evidence="1">Catalyzes a cyclopropane ring-opening reaction, the irreversible conversion of 1-aminocyclopropane-1-carboxylate (ACC) to ammonia and alpha-ketobutyrate. Allows growth on ACC as a nitrogen source.</text>
</comment>
<comment type="catalytic activity">
    <reaction evidence="1">
        <text>1-aminocyclopropane-1-carboxylate + H2O = 2-oxobutanoate + NH4(+)</text>
        <dbReference type="Rhea" id="RHEA:16933"/>
        <dbReference type="ChEBI" id="CHEBI:15377"/>
        <dbReference type="ChEBI" id="CHEBI:16763"/>
        <dbReference type="ChEBI" id="CHEBI:28938"/>
        <dbReference type="ChEBI" id="CHEBI:58360"/>
        <dbReference type="EC" id="3.5.99.7"/>
    </reaction>
</comment>
<comment type="cofactor">
    <cofactor evidence="1">
        <name>pyridoxal 5'-phosphate</name>
        <dbReference type="ChEBI" id="CHEBI:597326"/>
    </cofactor>
</comment>
<comment type="subunit">
    <text evidence="1">Homotrimer.</text>
</comment>
<comment type="similarity">
    <text evidence="1">Belongs to the ACC deaminase/D-cysteine desulfhydrase family.</text>
</comment>
<evidence type="ECO:0000255" key="1">
    <source>
        <dbReference type="HAMAP-Rule" id="MF_00807"/>
    </source>
</evidence>
<keyword id="KW-0378">Hydrolase</keyword>
<keyword id="KW-0663">Pyridoxal phosphate</keyword>
<feature type="chain" id="PRO_0000304372" description="1-aminocyclopropane-1-carboxylate deaminase">
    <location>
        <begin position="1"/>
        <end position="338"/>
    </location>
</feature>
<feature type="active site" description="Nucleophile" evidence="1">
    <location>
        <position position="78"/>
    </location>
</feature>
<feature type="modified residue" description="N6-(pyridoxal phosphate)lysine" evidence="1">
    <location>
        <position position="51"/>
    </location>
</feature>
<organism>
    <name type="scientific">Burkholderia ambifaria (strain ATCC BAA-244 / DSM 16087 / CCUG 44356 / LMG 19182 / AMMD)</name>
    <name type="common">Burkholderia cepacia (strain AMMD)</name>
    <dbReference type="NCBI Taxonomy" id="339670"/>
    <lineage>
        <taxon>Bacteria</taxon>
        <taxon>Pseudomonadati</taxon>
        <taxon>Pseudomonadota</taxon>
        <taxon>Betaproteobacteria</taxon>
        <taxon>Burkholderiales</taxon>
        <taxon>Burkholderiaceae</taxon>
        <taxon>Burkholderia</taxon>
        <taxon>Burkholderia cepacia complex</taxon>
    </lineage>
</organism>
<sequence>MNLQRFSRYPLTFGPTPIQPLKRLSQHLGGKVELYAKREDCNSGLAFGGNKTRKLEYLVPDALAQGADTLVSIGGVQSNQTRQVAAVAAHLGMKCVLVQEHWVNYEDPVYDRVGNIQLSRMMGADVRLVADGFDIGIRRSWEEAMESVRQAGGKPYPIPAGCSEHPLGGLGFVGFAEEVREQEAQLGFKFDYVVVCSVTGSTQAGMVVGFAADGRADRVIGIDASATPERTHEQITRIARHTAELVDLGRPITEADVVLDTRYAGPEYGLPNDGTLEAIRLCARLEGMLTDPVYEGKSMHGMIDKVRRGEFEPGSKVLYAHLGGVPALSAYAEIFRNG</sequence>
<protein>
    <recommendedName>
        <fullName evidence="1">1-aminocyclopropane-1-carboxylate deaminase</fullName>
        <shortName evidence="1">ACC deaminase</shortName>
        <shortName evidence="1">ACCD</shortName>
        <ecNumber evidence="1">3.5.99.7</ecNumber>
    </recommendedName>
</protein>
<proteinExistence type="inferred from homology"/>
<name>1A1D_BURCM</name>
<gene>
    <name evidence="1" type="primary">acdS</name>
    <name type="ordered locus">Bamb_5155</name>
</gene>
<reference key="1">
    <citation type="submission" date="2006-08" db="EMBL/GenBank/DDBJ databases">
        <title>Complete sequence of chromosome 2 of Burkholderia cepacia AMMD.</title>
        <authorList>
            <person name="Copeland A."/>
            <person name="Lucas S."/>
            <person name="Lapidus A."/>
            <person name="Barry K."/>
            <person name="Detter J.C."/>
            <person name="Glavina del Rio T."/>
            <person name="Hammon N."/>
            <person name="Israni S."/>
            <person name="Pitluck S."/>
            <person name="Bruce D."/>
            <person name="Chain P."/>
            <person name="Malfatti S."/>
            <person name="Shin M."/>
            <person name="Vergez L."/>
            <person name="Schmutz J."/>
            <person name="Larimer F."/>
            <person name="Land M."/>
            <person name="Hauser L."/>
            <person name="Kyrpides N."/>
            <person name="Kim E."/>
            <person name="Parke J."/>
            <person name="Coenye T."/>
            <person name="Konstantinidis K."/>
            <person name="Ramette A."/>
            <person name="Tiedje J."/>
            <person name="Richardson P."/>
        </authorList>
    </citation>
    <scope>NUCLEOTIDE SEQUENCE [LARGE SCALE GENOMIC DNA]</scope>
    <source>
        <strain>ATCC BAA-244 / DSM 16087 / CCUG 44356 / LMG 19182 / AMMD</strain>
    </source>
</reference>
<dbReference type="EC" id="3.5.99.7" evidence="1"/>
<dbReference type="EMBL" id="CP000441">
    <property type="protein sequence ID" value="ABI90704.1"/>
    <property type="molecule type" value="Genomic_DNA"/>
</dbReference>
<dbReference type="RefSeq" id="WP_011660085.1">
    <property type="nucleotide sequence ID" value="NC_008391.1"/>
</dbReference>
<dbReference type="SMR" id="Q0B569"/>
<dbReference type="GeneID" id="93088090"/>
<dbReference type="KEGG" id="bam:Bamb_5155"/>
<dbReference type="PATRIC" id="fig|339670.21.peg.5542"/>
<dbReference type="eggNOG" id="COG2515">
    <property type="taxonomic scope" value="Bacteria"/>
</dbReference>
<dbReference type="Proteomes" id="UP000000662">
    <property type="component" value="Chromosome 2"/>
</dbReference>
<dbReference type="GO" id="GO:0008660">
    <property type="term" value="F:1-aminocyclopropane-1-carboxylate deaminase activity"/>
    <property type="evidence" value="ECO:0007669"/>
    <property type="project" value="UniProtKB-UniRule"/>
</dbReference>
<dbReference type="GO" id="GO:0019148">
    <property type="term" value="F:D-cysteine desulfhydrase activity"/>
    <property type="evidence" value="ECO:0007669"/>
    <property type="project" value="TreeGrafter"/>
</dbReference>
<dbReference type="GO" id="GO:0030170">
    <property type="term" value="F:pyridoxal phosphate binding"/>
    <property type="evidence" value="ECO:0007669"/>
    <property type="project" value="InterPro"/>
</dbReference>
<dbReference type="GO" id="GO:0018871">
    <property type="term" value="P:1-aminocyclopropane-1-carboxylate metabolic process"/>
    <property type="evidence" value="ECO:0007669"/>
    <property type="project" value="UniProtKB-UniRule"/>
</dbReference>
<dbReference type="GO" id="GO:0009310">
    <property type="term" value="P:amine catabolic process"/>
    <property type="evidence" value="ECO:0007669"/>
    <property type="project" value="InterPro"/>
</dbReference>
<dbReference type="CDD" id="cd06449">
    <property type="entry name" value="ACCD"/>
    <property type="match status" value="1"/>
</dbReference>
<dbReference type="FunFam" id="3.40.50.1100:FF:000048">
    <property type="entry name" value="1-aminocyclopropane-1-carboxylate deaminase"/>
    <property type="match status" value="1"/>
</dbReference>
<dbReference type="Gene3D" id="3.40.50.1100">
    <property type="match status" value="2"/>
</dbReference>
<dbReference type="HAMAP" id="MF_00807">
    <property type="entry name" value="ACC_deaminase"/>
    <property type="match status" value="1"/>
</dbReference>
<dbReference type="InterPro" id="IPR027278">
    <property type="entry name" value="ACCD_DCysDesulf"/>
</dbReference>
<dbReference type="InterPro" id="IPR005965">
    <property type="entry name" value="ACP_carboxylate_deaminase"/>
</dbReference>
<dbReference type="InterPro" id="IPR020601">
    <property type="entry name" value="ACP_carboxylate_deaminase_bac"/>
</dbReference>
<dbReference type="InterPro" id="IPR001926">
    <property type="entry name" value="TrpB-like_PALP"/>
</dbReference>
<dbReference type="InterPro" id="IPR036052">
    <property type="entry name" value="TrpB-like_PALP_sf"/>
</dbReference>
<dbReference type="NCBIfam" id="TIGR01274">
    <property type="entry name" value="ACC_deam"/>
    <property type="match status" value="1"/>
</dbReference>
<dbReference type="PANTHER" id="PTHR43780">
    <property type="entry name" value="1-AMINOCYCLOPROPANE-1-CARBOXYLATE DEAMINASE-RELATED"/>
    <property type="match status" value="1"/>
</dbReference>
<dbReference type="PANTHER" id="PTHR43780:SF2">
    <property type="entry name" value="1-AMINOCYCLOPROPANE-1-CARBOXYLATE DEAMINASE-RELATED"/>
    <property type="match status" value="1"/>
</dbReference>
<dbReference type="Pfam" id="PF00291">
    <property type="entry name" value="PALP"/>
    <property type="match status" value="1"/>
</dbReference>
<dbReference type="PIRSF" id="PIRSF006278">
    <property type="entry name" value="ACCD_DCysDesulf"/>
    <property type="match status" value="1"/>
</dbReference>
<dbReference type="SUPFAM" id="SSF53686">
    <property type="entry name" value="Tryptophan synthase beta subunit-like PLP-dependent enzymes"/>
    <property type="match status" value="1"/>
</dbReference>
<accession>Q0B569</accession>